<sequence>MGENMIKSEDLVFKYVNAEEQTEKVAINHVSMEVKKGEFLVILGHNGSGKSTMAKHMNALLLPSGGKMYVDGLDTSDIENLWEVRRRAGMVFQNPDNQLVATIVEEDVAFGPENLGVDPKEIRERVDDSLKAVGMYEYRKHAPHLLSGGQKQRIAIAGILAMRPKCIVLDEPTAMLDPSGRNEVMKTIKEVNKKFGITIILITHYMDEAAQADRIIVMDKGEKVMEGVPREIFSQVEKIKSIGLDVPQVTELAYELQKEGVDISTEILNIDEMVNALCQLK</sequence>
<evidence type="ECO:0000255" key="1">
    <source>
        <dbReference type="HAMAP-Rule" id="MF_01710"/>
    </source>
</evidence>
<organism>
    <name type="scientific">Clostridium perfringens (strain ATCC 13124 / DSM 756 / JCM 1290 / NCIMB 6125 / NCTC 8237 / Type A)</name>
    <dbReference type="NCBI Taxonomy" id="195103"/>
    <lineage>
        <taxon>Bacteria</taxon>
        <taxon>Bacillati</taxon>
        <taxon>Bacillota</taxon>
        <taxon>Clostridia</taxon>
        <taxon>Eubacteriales</taxon>
        <taxon>Clostridiaceae</taxon>
        <taxon>Clostridium</taxon>
    </lineage>
</organism>
<protein>
    <recommendedName>
        <fullName evidence="1">Energy-coupling factor transporter ATP-binding protein EcfA1</fullName>
        <shortName evidence="1">ECF transporter A component EcfA1</shortName>
        <ecNumber evidence="1">7.-.-.-</ecNumber>
    </recommendedName>
</protein>
<reference key="1">
    <citation type="journal article" date="2006" name="Genome Res.">
        <title>Skewed genomic variability in strains of the toxigenic bacterial pathogen, Clostridium perfringens.</title>
        <authorList>
            <person name="Myers G.S.A."/>
            <person name="Rasko D.A."/>
            <person name="Cheung J.K."/>
            <person name="Ravel J."/>
            <person name="Seshadri R."/>
            <person name="DeBoy R.T."/>
            <person name="Ren Q."/>
            <person name="Varga J."/>
            <person name="Awad M.M."/>
            <person name="Brinkac L.M."/>
            <person name="Daugherty S.C."/>
            <person name="Haft D.H."/>
            <person name="Dodson R.J."/>
            <person name="Madupu R."/>
            <person name="Nelson W.C."/>
            <person name="Rosovitz M.J."/>
            <person name="Sullivan S.A."/>
            <person name="Khouri H."/>
            <person name="Dimitrov G.I."/>
            <person name="Watkins K.L."/>
            <person name="Mulligan S."/>
            <person name="Benton J."/>
            <person name="Radune D."/>
            <person name="Fisher D.J."/>
            <person name="Atkins H.S."/>
            <person name="Hiscox T."/>
            <person name="Jost B.H."/>
            <person name="Billington S.J."/>
            <person name="Songer J.G."/>
            <person name="McClane B.A."/>
            <person name="Titball R.W."/>
            <person name="Rood J.I."/>
            <person name="Melville S.B."/>
            <person name="Paulsen I.T."/>
        </authorList>
    </citation>
    <scope>NUCLEOTIDE SEQUENCE [LARGE SCALE GENOMIC DNA]</scope>
    <source>
        <strain>ATCC 13124 / DSM 756 / JCM 1290 / NCIMB 6125 / NCTC 8237 / S 107 / Type A</strain>
    </source>
</reference>
<dbReference type="EC" id="7.-.-.-" evidence="1"/>
<dbReference type="EMBL" id="CP000246">
    <property type="protein sequence ID" value="ABG84809.1"/>
    <property type="molecule type" value="Genomic_DNA"/>
</dbReference>
<dbReference type="RefSeq" id="WP_003454376.1">
    <property type="nucleotide sequence ID" value="NC_008261.1"/>
</dbReference>
<dbReference type="SMR" id="Q0TMS7"/>
<dbReference type="STRING" id="195103.CPF_2683"/>
<dbReference type="PaxDb" id="195103-CPF_2683"/>
<dbReference type="KEGG" id="cpf:CPF_2683"/>
<dbReference type="eggNOG" id="COG1122">
    <property type="taxonomic scope" value="Bacteria"/>
</dbReference>
<dbReference type="HOGENOM" id="CLU_000604_1_22_9"/>
<dbReference type="Proteomes" id="UP000001823">
    <property type="component" value="Chromosome"/>
</dbReference>
<dbReference type="GO" id="GO:0043190">
    <property type="term" value="C:ATP-binding cassette (ABC) transporter complex"/>
    <property type="evidence" value="ECO:0007669"/>
    <property type="project" value="TreeGrafter"/>
</dbReference>
<dbReference type="GO" id="GO:0005524">
    <property type="term" value="F:ATP binding"/>
    <property type="evidence" value="ECO:0007669"/>
    <property type="project" value="UniProtKB-KW"/>
</dbReference>
<dbReference type="GO" id="GO:0016887">
    <property type="term" value="F:ATP hydrolysis activity"/>
    <property type="evidence" value="ECO:0007669"/>
    <property type="project" value="InterPro"/>
</dbReference>
<dbReference type="GO" id="GO:0042626">
    <property type="term" value="F:ATPase-coupled transmembrane transporter activity"/>
    <property type="evidence" value="ECO:0007669"/>
    <property type="project" value="TreeGrafter"/>
</dbReference>
<dbReference type="CDD" id="cd03225">
    <property type="entry name" value="ABC_cobalt_CbiO_domain1"/>
    <property type="match status" value="1"/>
</dbReference>
<dbReference type="FunFam" id="3.40.50.300:FF:000224">
    <property type="entry name" value="Energy-coupling factor transporter ATP-binding protein EcfA"/>
    <property type="match status" value="1"/>
</dbReference>
<dbReference type="Gene3D" id="3.40.50.300">
    <property type="entry name" value="P-loop containing nucleotide triphosphate hydrolases"/>
    <property type="match status" value="1"/>
</dbReference>
<dbReference type="InterPro" id="IPR003593">
    <property type="entry name" value="AAA+_ATPase"/>
</dbReference>
<dbReference type="InterPro" id="IPR003439">
    <property type="entry name" value="ABC_transporter-like_ATP-bd"/>
</dbReference>
<dbReference type="InterPro" id="IPR017871">
    <property type="entry name" value="ABC_transporter-like_CS"/>
</dbReference>
<dbReference type="InterPro" id="IPR015856">
    <property type="entry name" value="ABC_transpr_CbiO/EcfA_su"/>
</dbReference>
<dbReference type="InterPro" id="IPR050095">
    <property type="entry name" value="ECF_ABC_transporter_ATP-bd"/>
</dbReference>
<dbReference type="InterPro" id="IPR030947">
    <property type="entry name" value="EcfA_1"/>
</dbReference>
<dbReference type="InterPro" id="IPR027417">
    <property type="entry name" value="P-loop_NTPase"/>
</dbReference>
<dbReference type="NCBIfam" id="TIGR04520">
    <property type="entry name" value="ECF_ATPase_1"/>
    <property type="match status" value="1"/>
</dbReference>
<dbReference type="NCBIfam" id="NF010167">
    <property type="entry name" value="PRK13648.1"/>
    <property type="match status" value="1"/>
</dbReference>
<dbReference type="PANTHER" id="PTHR43553:SF24">
    <property type="entry name" value="ENERGY-COUPLING FACTOR TRANSPORTER ATP-BINDING PROTEIN ECFA1"/>
    <property type="match status" value="1"/>
</dbReference>
<dbReference type="PANTHER" id="PTHR43553">
    <property type="entry name" value="HEAVY METAL TRANSPORTER"/>
    <property type="match status" value="1"/>
</dbReference>
<dbReference type="Pfam" id="PF00005">
    <property type="entry name" value="ABC_tran"/>
    <property type="match status" value="1"/>
</dbReference>
<dbReference type="SMART" id="SM00382">
    <property type="entry name" value="AAA"/>
    <property type="match status" value="1"/>
</dbReference>
<dbReference type="SUPFAM" id="SSF52540">
    <property type="entry name" value="P-loop containing nucleoside triphosphate hydrolases"/>
    <property type="match status" value="1"/>
</dbReference>
<dbReference type="PROSITE" id="PS00211">
    <property type="entry name" value="ABC_TRANSPORTER_1"/>
    <property type="match status" value="1"/>
</dbReference>
<dbReference type="PROSITE" id="PS50893">
    <property type="entry name" value="ABC_TRANSPORTER_2"/>
    <property type="match status" value="1"/>
</dbReference>
<dbReference type="PROSITE" id="PS51246">
    <property type="entry name" value="CBIO"/>
    <property type="match status" value="1"/>
</dbReference>
<proteinExistence type="inferred from homology"/>
<feature type="chain" id="PRO_0000287934" description="Energy-coupling factor transporter ATP-binding protein EcfA1">
    <location>
        <begin position="1"/>
        <end position="281"/>
    </location>
</feature>
<feature type="domain" description="ABC transporter" evidence="1">
    <location>
        <begin position="6"/>
        <end position="245"/>
    </location>
</feature>
<feature type="binding site" evidence="1">
    <location>
        <begin position="44"/>
        <end position="51"/>
    </location>
    <ligand>
        <name>ATP</name>
        <dbReference type="ChEBI" id="CHEBI:30616"/>
    </ligand>
</feature>
<comment type="function">
    <text evidence="1">ATP-binding (A) component of a common energy-coupling factor (ECF) ABC-transporter complex. Unlike classic ABC transporters this ECF transporter provides the energy necessary to transport a number of different substrates.</text>
</comment>
<comment type="subunit">
    <text evidence="1">Forms a stable energy-coupling factor (ECF) transporter complex composed of 2 membrane-embedded substrate-binding proteins (S component), 2 ATP-binding proteins (A component) and 2 transmembrane proteins (T component).</text>
</comment>
<comment type="subcellular location">
    <subcellularLocation>
        <location evidence="1">Cell membrane</location>
        <topology evidence="1">Peripheral membrane protein</topology>
    </subcellularLocation>
</comment>
<comment type="similarity">
    <text evidence="1">Belongs to the ABC transporter superfamily. Energy-coupling factor EcfA family.</text>
</comment>
<gene>
    <name evidence="1" type="primary">ecfA1</name>
    <name type="synonym">cbiO1</name>
    <name type="ordered locus">CPF_2683</name>
</gene>
<keyword id="KW-0067">ATP-binding</keyword>
<keyword id="KW-1003">Cell membrane</keyword>
<keyword id="KW-0472">Membrane</keyword>
<keyword id="KW-0547">Nucleotide-binding</keyword>
<keyword id="KW-1278">Translocase</keyword>
<keyword id="KW-0813">Transport</keyword>
<name>ECFA1_CLOP1</name>
<accession>Q0TMS7</accession>